<comment type="function">
    <text evidence="2">Snake venom phospholipase A2 (PLA2) induces increase of creatine kinase levels, which is an indicator or myonecrosis (PubMed:17953979). It also promotes renal alterations in the isolated perfused rat kidney (PubMed:17953979). It increases perfusion pressure (PP), renal vascular resistance (RVR), urinary flow (UF) and glomerular filtration rate (GFR). Sodium and chloride tubular reabsorption decreased at 120 minutes, without alteration in potassium transport (PubMed:17953979). PLA2 catalyzes the calcium-dependent hydrolysis of the 2-acyl groups in 3-sn-phosphoglycerides (PubMed:17953979).</text>
</comment>
<comment type="catalytic activity">
    <reaction evidence="2">
        <text>a 1,2-diacyl-sn-glycero-3-phosphocholine + H2O = a 1-acyl-sn-glycero-3-phosphocholine + a fatty acid + H(+)</text>
        <dbReference type="Rhea" id="RHEA:15801"/>
        <dbReference type="ChEBI" id="CHEBI:15377"/>
        <dbReference type="ChEBI" id="CHEBI:15378"/>
        <dbReference type="ChEBI" id="CHEBI:28868"/>
        <dbReference type="ChEBI" id="CHEBI:57643"/>
        <dbReference type="ChEBI" id="CHEBI:58168"/>
        <dbReference type="EC" id="3.1.1.4"/>
    </reaction>
</comment>
<comment type="cofactor">
    <cofactor evidence="1">
        <name>Ca(2+)</name>
        <dbReference type="ChEBI" id="CHEBI:29108"/>
    </cofactor>
    <text evidence="1">Binds 1 Ca(2+) ion.</text>
</comment>
<comment type="subcellular location">
    <subcellularLocation>
        <location evidence="2">Secreted</location>
    </subcellularLocation>
</comment>
<comment type="tissue specificity">
    <text evidence="5">Expressed by the venom gland.</text>
</comment>
<comment type="mass spectrometry"/>
<comment type="similarity">
    <text evidence="4">Belongs to the phospholipase A2 family. Group II subfamily. D49 sub-subfamily.</text>
</comment>
<sequence>SLFEFGKMILKETGKNPFTSYGFYGCYCGWGGRGGPKDATDRCCF</sequence>
<proteinExistence type="evidence at protein level"/>
<keyword id="KW-0106">Calcium</keyword>
<keyword id="KW-0903">Direct protein sequencing</keyword>
<keyword id="KW-1015">Disulfide bond</keyword>
<keyword id="KW-0378">Hydrolase</keyword>
<keyword id="KW-0479">Metal-binding</keyword>
<keyword id="KW-0959">Myotoxin</keyword>
<keyword id="KW-0964">Secreted</keyword>
<keyword id="KW-0800">Toxin</keyword>
<protein>
    <recommendedName>
        <fullName evidence="3">Acidic phospholipase A2 Bi PLA2</fullName>
        <shortName>svPLA2</shortName>
        <ecNumber evidence="2">3.1.1.4</ecNumber>
    </recommendedName>
    <alternativeName>
        <fullName>Phosphatidylcholine 2-acylhydrolase</fullName>
    </alternativeName>
</protein>
<feature type="chain" id="PRO_0000455657" description="Acidic phospholipase A2 Bi PLA2" evidence="5">
    <location>
        <begin position="1"/>
        <end position="45" status="greater than"/>
    </location>
</feature>
<feature type="binding site" evidence="1">
    <location>
        <position position="27"/>
    </location>
    <ligand>
        <name>Ca(2+)</name>
        <dbReference type="ChEBI" id="CHEBI:29108"/>
    </ligand>
</feature>
<feature type="binding site" evidence="1">
    <location>
        <position position="29"/>
    </location>
    <ligand>
        <name>Ca(2+)</name>
        <dbReference type="ChEBI" id="CHEBI:29108"/>
    </ligand>
</feature>
<feature type="binding site" evidence="1">
    <location>
        <position position="31"/>
    </location>
    <ligand>
        <name>Ca(2+)</name>
        <dbReference type="ChEBI" id="CHEBI:29108"/>
    </ligand>
</feature>
<feature type="disulfide bond" evidence="4">
    <location>
        <begin position="26"/>
        <end status="unknown"/>
    </location>
</feature>
<feature type="disulfide bond" evidence="1">
    <location>
        <begin position="28"/>
        <end position="44"/>
    </location>
</feature>
<feature type="disulfide bond" evidence="4">
    <location>
        <begin position="43"/>
        <end status="unknown"/>
    </location>
</feature>
<feature type="non-terminal residue" evidence="4">
    <location>
        <position position="45"/>
    </location>
</feature>
<reference key="1">
    <citation type="journal article" date="2008" name="Toxicon">
        <title>Purification and renal effects of phospholipase A(2) isolated from Bothrops insularis venom.</title>
        <authorList>
            <person name="Machado Braga M.D."/>
            <person name="Costa Martins A.M."/>
            <person name="Alves C.D."/>
            <person name="de Menezes D.B."/>
            <person name="Martins R.D."/>
            <person name="Ferreira Barbosa P.S."/>
            <person name="de Sousa Oliveira I.M."/>
            <person name="Toyama M.H."/>
            <person name="Toyama D.O."/>
            <person name="Dos Santos Diz Filho E.B."/>
            <person name="Ramos Fagundes F.H."/>
            <person name="Fonteles M.C."/>
            <person name="Azul Monteiro H.S."/>
        </authorList>
    </citation>
    <scope>PROTEIN SEQUENCE</scope>
    <scope>FUNCTION</scope>
    <scope>CATALYTIC ACTIVITY</scope>
    <scope>SUBCELLULAR LOCATION</scope>
    <scope>MASS SPECTROMETRY</scope>
    <source>
        <tissue>Venom</tissue>
    </source>
</reference>
<evidence type="ECO:0000250" key="1">
    <source>
        <dbReference type="UniProtKB" id="P59071"/>
    </source>
</evidence>
<evidence type="ECO:0000269" key="2">
    <source>
    </source>
</evidence>
<evidence type="ECO:0000303" key="3">
    <source>
    </source>
</evidence>
<evidence type="ECO:0000305" key="4"/>
<evidence type="ECO:0000305" key="5">
    <source>
    </source>
</evidence>
<dbReference type="EC" id="3.1.1.4" evidence="2"/>
<dbReference type="SMR" id="P0DV82"/>
<dbReference type="GO" id="GO:0005576">
    <property type="term" value="C:extracellular region"/>
    <property type="evidence" value="ECO:0007669"/>
    <property type="project" value="UniProtKB-SubCell"/>
</dbReference>
<dbReference type="GO" id="GO:0005509">
    <property type="term" value="F:calcium ion binding"/>
    <property type="evidence" value="ECO:0007669"/>
    <property type="project" value="InterPro"/>
</dbReference>
<dbReference type="GO" id="GO:0047498">
    <property type="term" value="F:calcium-dependent phospholipase A2 activity"/>
    <property type="evidence" value="ECO:0007669"/>
    <property type="project" value="TreeGrafter"/>
</dbReference>
<dbReference type="GO" id="GO:0005543">
    <property type="term" value="F:phospholipid binding"/>
    <property type="evidence" value="ECO:0007669"/>
    <property type="project" value="TreeGrafter"/>
</dbReference>
<dbReference type="GO" id="GO:0090729">
    <property type="term" value="F:toxin activity"/>
    <property type="evidence" value="ECO:0007669"/>
    <property type="project" value="UniProtKB-KW"/>
</dbReference>
<dbReference type="GO" id="GO:0050482">
    <property type="term" value="P:arachidonate secretion"/>
    <property type="evidence" value="ECO:0007669"/>
    <property type="project" value="InterPro"/>
</dbReference>
<dbReference type="GO" id="GO:0016042">
    <property type="term" value="P:lipid catabolic process"/>
    <property type="evidence" value="ECO:0007669"/>
    <property type="project" value="InterPro"/>
</dbReference>
<dbReference type="GO" id="GO:0042130">
    <property type="term" value="P:negative regulation of T cell proliferation"/>
    <property type="evidence" value="ECO:0007669"/>
    <property type="project" value="TreeGrafter"/>
</dbReference>
<dbReference type="GO" id="GO:0006644">
    <property type="term" value="P:phospholipid metabolic process"/>
    <property type="evidence" value="ECO:0007669"/>
    <property type="project" value="InterPro"/>
</dbReference>
<dbReference type="Gene3D" id="1.20.90.10">
    <property type="entry name" value="Phospholipase A2 domain"/>
    <property type="match status" value="1"/>
</dbReference>
<dbReference type="InterPro" id="IPR001211">
    <property type="entry name" value="PLipase_A2"/>
</dbReference>
<dbReference type="InterPro" id="IPR016090">
    <property type="entry name" value="PLipase_A2_dom"/>
</dbReference>
<dbReference type="InterPro" id="IPR036444">
    <property type="entry name" value="PLipase_A2_dom_sf"/>
</dbReference>
<dbReference type="PANTHER" id="PTHR11716">
    <property type="entry name" value="PHOSPHOLIPASE A2 FAMILY MEMBER"/>
    <property type="match status" value="1"/>
</dbReference>
<dbReference type="PANTHER" id="PTHR11716:SF9">
    <property type="entry name" value="PHOSPHOLIPASE A2, MEMBRANE ASSOCIATED"/>
    <property type="match status" value="1"/>
</dbReference>
<dbReference type="Pfam" id="PF00068">
    <property type="entry name" value="Phospholip_A2_1"/>
    <property type="match status" value="1"/>
</dbReference>
<dbReference type="PRINTS" id="PR00389">
    <property type="entry name" value="PHPHLIPASEA2"/>
</dbReference>
<dbReference type="SMART" id="SM00085">
    <property type="entry name" value="PA2c"/>
    <property type="match status" value="1"/>
</dbReference>
<dbReference type="SUPFAM" id="SSF48619">
    <property type="entry name" value="Phospholipase A2, PLA2"/>
    <property type="match status" value="1"/>
</dbReference>
<name>PA2_BOTIN</name>
<organism>
    <name type="scientific">Bothrops insularis</name>
    <name type="common">Golden lancehead</name>
    <name type="synonym">Lachesis insularis</name>
    <dbReference type="NCBI Taxonomy" id="8723"/>
    <lineage>
        <taxon>Eukaryota</taxon>
        <taxon>Metazoa</taxon>
        <taxon>Chordata</taxon>
        <taxon>Craniata</taxon>
        <taxon>Vertebrata</taxon>
        <taxon>Euteleostomi</taxon>
        <taxon>Lepidosauria</taxon>
        <taxon>Squamata</taxon>
        <taxon>Bifurcata</taxon>
        <taxon>Unidentata</taxon>
        <taxon>Episquamata</taxon>
        <taxon>Toxicofera</taxon>
        <taxon>Serpentes</taxon>
        <taxon>Colubroidea</taxon>
        <taxon>Viperidae</taxon>
        <taxon>Crotalinae</taxon>
        <taxon>Bothrops</taxon>
    </lineage>
</organism>
<accession>P0DV82</accession>